<sequence length="428" mass="48624">MLDIRLFRNEPVTVKSKIELRGDDPKVVDEILELDEQRRKLISATEEMKARRNKVSEEIALKKRNKENADDVIAEMRTLGDDIKEKDSQLNEIDNKMTGILCRIPNLISDDVPQGESDEDNVEVKKWGTPREFSFEPKAHWDIVEELKMADFDRAAKVSGARFVYLTNEGAQLERALMNYMITKHTTQHGYTEMMVPQLVNADTMYGTGQLPKFEEDLFKVEKEGLYTIPTAEVPLTNFYRNEIIQPGVLPEKFTGQSACFRSEAGSAGRDTRGLIRLHQFDKVEMVRFEQPEDSWNALEEMTTNAEAILEELGLPYRRVILCTGDIGFSASKTYDLEVWLPSYNDYKEISSCSNCTDFQARRANIRFKRDKAAKPELAHTLNGSGLAVGRTFAAIVENYQNEDGTVTIPEALVPFMGGKTQISKPVK</sequence>
<proteinExistence type="inferred from homology"/>
<keyword id="KW-0030">Aminoacyl-tRNA synthetase</keyword>
<keyword id="KW-0067">ATP-binding</keyword>
<keyword id="KW-0963">Cytoplasm</keyword>
<keyword id="KW-0436">Ligase</keyword>
<keyword id="KW-0547">Nucleotide-binding</keyword>
<keyword id="KW-0648">Protein biosynthesis</keyword>
<accession>Q8NYY2</accession>
<gene>
    <name evidence="1" type="primary">serS</name>
    <name type="ordered locus">MW0009</name>
</gene>
<protein>
    <recommendedName>
        <fullName evidence="1">Serine--tRNA ligase</fullName>
        <ecNumber evidence="1">6.1.1.11</ecNumber>
    </recommendedName>
    <alternativeName>
        <fullName evidence="1">Seryl-tRNA synthetase</fullName>
        <shortName evidence="1">SerRS</shortName>
    </alternativeName>
    <alternativeName>
        <fullName evidence="1">Seryl-tRNA(Ser/Sec) synthetase</fullName>
    </alternativeName>
</protein>
<organism>
    <name type="scientific">Staphylococcus aureus (strain MW2)</name>
    <dbReference type="NCBI Taxonomy" id="196620"/>
    <lineage>
        <taxon>Bacteria</taxon>
        <taxon>Bacillati</taxon>
        <taxon>Bacillota</taxon>
        <taxon>Bacilli</taxon>
        <taxon>Bacillales</taxon>
        <taxon>Staphylococcaceae</taxon>
        <taxon>Staphylococcus</taxon>
    </lineage>
</organism>
<name>SYS_STAAW</name>
<reference key="1">
    <citation type="journal article" date="2002" name="Lancet">
        <title>Genome and virulence determinants of high virulence community-acquired MRSA.</title>
        <authorList>
            <person name="Baba T."/>
            <person name="Takeuchi F."/>
            <person name="Kuroda M."/>
            <person name="Yuzawa H."/>
            <person name="Aoki K."/>
            <person name="Oguchi A."/>
            <person name="Nagai Y."/>
            <person name="Iwama N."/>
            <person name="Asano K."/>
            <person name="Naimi T."/>
            <person name="Kuroda H."/>
            <person name="Cui L."/>
            <person name="Yamamoto K."/>
            <person name="Hiramatsu K."/>
        </authorList>
    </citation>
    <scope>NUCLEOTIDE SEQUENCE [LARGE SCALE GENOMIC DNA]</scope>
    <source>
        <strain>MW2</strain>
    </source>
</reference>
<evidence type="ECO:0000255" key="1">
    <source>
        <dbReference type="HAMAP-Rule" id="MF_00176"/>
    </source>
</evidence>
<comment type="function">
    <text evidence="1">Catalyzes the attachment of serine to tRNA(Ser). Is also able to aminoacylate tRNA(Sec) with serine, to form the misacylated tRNA L-seryl-tRNA(Sec), which will be further converted into selenocysteinyl-tRNA(Sec).</text>
</comment>
<comment type="catalytic activity">
    <reaction evidence="1">
        <text>tRNA(Ser) + L-serine + ATP = L-seryl-tRNA(Ser) + AMP + diphosphate + H(+)</text>
        <dbReference type="Rhea" id="RHEA:12292"/>
        <dbReference type="Rhea" id="RHEA-COMP:9669"/>
        <dbReference type="Rhea" id="RHEA-COMP:9703"/>
        <dbReference type="ChEBI" id="CHEBI:15378"/>
        <dbReference type="ChEBI" id="CHEBI:30616"/>
        <dbReference type="ChEBI" id="CHEBI:33019"/>
        <dbReference type="ChEBI" id="CHEBI:33384"/>
        <dbReference type="ChEBI" id="CHEBI:78442"/>
        <dbReference type="ChEBI" id="CHEBI:78533"/>
        <dbReference type="ChEBI" id="CHEBI:456215"/>
        <dbReference type="EC" id="6.1.1.11"/>
    </reaction>
</comment>
<comment type="catalytic activity">
    <reaction evidence="1">
        <text>tRNA(Sec) + L-serine + ATP = L-seryl-tRNA(Sec) + AMP + diphosphate + H(+)</text>
        <dbReference type="Rhea" id="RHEA:42580"/>
        <dbReference type="Rhea" id="RHEA-COMP:9742"/>
        <dbReference type="Rhea" id="RHEA-COMP:10128"/>
        <dbReference type="ChEBI" id="CHEBI:15378"/>
        <dbReference type="ChEBI" id="CHEBI:30616"/>
        <dbReference type="ChEBI" id="CHEBI:33019"/>
        <dbReference type="ChEBI" id="CHEBI:33384"/>
        <dbReference type="ChEBI" id="CHEBI:78442"/>
        <dbReference type="ChEBI" id="CHEBI:78533"/>
        <dbReference type="ChEBI" id="CHEBI:456215"/>
        <dbReference type="EC" id="6.1.1.11"/>
    </reaction>
</comment>
<comment type="pathway">
    <text evidence="1">Aminoacyl-tRNA biosynthesis; selenocysteinyl-tRNA(Sec) biosynthesis; L-seryl-tRNA(Sec) from L-serine and tRNA(Sec): step 1/1.</text>
</comment>
<comment type="subunit">
    <text evidence="1">Homodimer. The tRNA molecule binds across the dimer.</text>
</comment>
<comment type="subcellular location">
    <subcellularLocation>
        <location evidence="1">Cytoplasm</location>
    </subcellularLocation>
</comment>
<comment type="domain">
    <text evidence="1">Consists of two distinct domains, a catalytic core and a N-terminal extension that is involved in tRNA binding.</text>
</comment>
<comment type="similarity">
    <text evidence="1">Belongs to the class-II aminoacyl-tRNA synthetase family. Type-1 seryl-tRNA synthetase subfamily.</text>
</comment>
<feature type="chain" id="PRO_0000122124" description="Serine--tRNA ligase">
    <location>
        <begin position="1"/>
        <end position="428"/>
    </location>
</feature>
<feature type="binding site" evidence="1">
    <location>
        <begin position="231"/>
        <end position="233"/>
    </location>
    <ligand>
        <name>L-serine</name>
        <dbReference type="ChEBI" id="CHEBI:33384"/>
    </ligand>
</feature>
<feature type="binding site" evidence="1">
    <location>
        <begin position="262"/>
        <end position="264"/>
    </location>
    <ligand>
        <name>ATP</name>
        <dbReference type="ChEBI" id="CHEBI:30616"/>
    </ligand>
</feature>
<feature type="binding site" evidence="1">
    <location>
        <position position="285"/>
    </location>
    <ligand>
        <name>L-serine</name>
        <dbReference type="ChEBI" id="CHEBI:33384"/>
    </ligand>
</feature>
<feature type="binding site" evidence="1">
    <location>
        <begin position="349"/>
        <end position="352"/>
    </location>
    <ligand>
        <name>ATP</name>
        <dbReference type="ChEBI" id="CHEBI:30616"/>
    </ligand>
</feature>
<feature type="binding site" evidence="1">
    <location>
        <position position="385"/>
    </location>
    <ligand>
        <name>L-serine</name>
        <dbReference type="ChEBI" id="CHEBI:33384"/>
    </ligand>
</feature>
<dbReference type="EC" id="6.1.1.11" evidence="1"/>
<dbReference type="EMBL" id="BA000033">
    <property type="protein sequence ID" value="BAB93874.1"/>
    <property type="molecule type" value="Genomic_DNA"/>
</dbReference>
<dbReference type="RefSeq" id="WP_000884342.1">
    <property type="nucleotide sequence ID" value="NC_003923.1"/>
</dbReference>
<dbReference type="SMR" id="Q8NYY2"/>
<dbReference type="KEGG" id="sam:MW0009"/>
<dbReference type="HOGENOM" id="CLU_023797_1_1_9"/>
<dbReference type="UniPathway" id="UPA00906">
    <property type="reaction ID" value="UER00895"/>
</dbReference>
<dbReference type="GO" id="GO:0005737">
    <property type="term" value="C:cytoplasm"/>
    <property type="evidence" value="ECO:0007669"/>
    <property type="project" value="UniProtKB-SubCell"/>
</dbReference>
<dbReference type="GO" id="GO:0005524">
    <property type="term" value="F:ATP binding"/>
    <property type="evidence" value="ECO:0007669"/>
    <property type="project" value="UniProtKB-UniRule"/>
</dbReference>
<dbReference type="GO" id="GO:0140096">
    <property type="term" value="F:catalytic activity, acting on a protein"/>
    <property type="evidence" value="ECO:0007669"/>
    <property type="project" value="UniProtKB-ARBA"/>
</dbReference>
<dbReference type="GO" id="GO:0004828">
    <property type="term" value="F:serine-tRNA ligase activity"/>
    <property type="evidence" value="ECO:0007669"/>
    <property type="project" value="UniProtKB-UniRule"/>
</dbReference>
<dbReference type="GO" id="GO:0016740">
    <property type="term" value="F:transferase activity"/>
    <property type="evidence" value="ECO:0007669"/>
    <property type="project" value="UniProtKB-ARBA"/>
</dbReference>
<dbReference type="GO" id="GO:0016260">
    <property type="term" value="P:selenocysteine biosynthetic process"/>
    <property type="evidence" value="ECO:0007669"/>
    <property type="project" value="UniProtKB-UniRule"/>
</dbReference>
<dbReference type="GO" id="GO:0006434">
    <property type="term" value="P:seryl-tRNA aminoacylation"/>
    <property type="evidence" value="ECO:0007669"/>
    <property type="project" value="UniProtKB-UniRule"/>
</dbReference>
<dbReference type="CDD" id="cd00770">
    <property type="entry name" value="SerRS_core"/>
    <property type="match status" value="1"/>
</dbReference>
<dbReference type="Gene3D" id="3.30.930.10">
    <property type="entry name" value="Bira Bifunctional Protein, Domain 2"/>
    <property type="match status" value="1"/>
</dbReference>
<dbReference type="Gene3D" id="1.10.287.40">
    <property type="entry name" value="Serine-tRNA synthetase, tRNA binding domain"/>
    <property type="match status" value="1"/>
</dbReference>
<dbReference type="HAMAP" id="MF_00176">
    <property type="entry name" value="Ser_tRNA_synth_type1"/>
    <property type="match status" value="1"/>
</dbReference>
<dbReference type="InterPro" id="IPR002314">
    <property type="entry name" value="aa-tRNA-synt_IIb"/>
</dbReference>
<dbReference type="InterPro" id="IPR006195">
    <property type="entry name" value="aa-tRNA-synth_II"/>
</dbReference>
<dbReference type="InterPro" id="IPR045864">
    <property type="entry name" value="aa-tRNA-synth_II/BPL/LPL"/>
</dbReference>
<dbReference type="InterPro" id="IPR002317">
    <property type="entry name" value="Ser-tRNA-ligase_type_1"/>
</dbReference>
<dbReference type="InterPro" id="IPR015866">
    <property type="entry name" value="Ser-tRNA-synth_1_N"/>
</dbReference>
<dbReference type="InterPro" id="IPR042103">
    <property type="entry name" value="SerRS_1_N_sf"/>
</dbReference>
<dbReference type="InterPro" id="IPR033729">
    <property type="entry name" value="SerRS_core"/>
</dbReference>
<dbReference type="InterPro" id="IPR010978">
    <property type="entry name" value="tRNA-bd_arm"/>
</dbReference>
<dbReference type="NCBIfam" id="TIGR00414">
    <property type="entry name" value="serS"/>
    <property type="match status" value="1"/>
</dbReference>
<dbReference type="PANTHER" id="PTHR43697:SF1">
    <property type="entry name" value="SERINE--TRNA LIGASE"/>
    <property type="match status" value="1"/>
</dbReference>
<dbReference type="PANTHER" id="PTHR43697">
    <property type="entry name" value="SERYL-TRNA SYNTHETASE"/>
    <property type="match status" value="1"/>
</dbReference>
<dbReference type="Pfam" id="PF02403">
    <property type="entry name" value="Seryl_tRNA_N"/>
    <property type="match status" value="1"/>
</dbReference>
<dbReference type="Pfam" id="PF00587">
    <property type="entry name" value="tRNA-synt_2b"/>
    <property type="match status" value="1"/>
</dbReference>
<dbReference type="PIRSF" id="PIRSF001529">
    <property type="entry name" value="Ser-tRNA-synth_IIa"/>
    <property type="match status" value="1"/>
</dbReference>
<dbReference type="PRINTS" id="PR00981">
    <property type="entry name" value="TRNASYNTHSER"/>
</dbReference>
<dbReference type="SUPFAM" id="SSF55681">
    <property type="entry name" value="Class II aaRS and biotin synthetases"/>
    <property type="match status" value="1"/>
</dbReference>
<dbReference type="SUPFAM" id="SSF46589">
    <property type="entry name" value="tRNA-binding arm"/>
    <property type="match status" value="1"/>
</dbReference>
<dbReference type="PROSITE" id="PS50862">
    <property type="entry name" value="AA_TRNA_LIGASE_II"/>
    <property type="match status" value="1"/>
</dbReference>